<gene>
    <name evidence="1" type="primary">sufS</name>
    <name type="ordered locus">YPN_1855</name>
    <name type="ORF">YP516_2063</name>
</gene>
<protein>
    <recommendedName>
        <fullName evidence="1">Cysteine desulfurase</fullName>
        <ecNumber evidence="1">2.8.1.7</ecNumber>
    </recommendedName>
    <alternativeName>
        <fullName evidence="1">Selenocysteine beta-lyase</fullName>
        <shortName evidence="1">SCL</shortName>
    </alternativeName>
    <alternativeName>
        <fullName evidence="1">Selenocysteine lyase</fullName>
        <ecNumber evidence="1">4.4.1.16</ecNumber>
    </alternativeName>
    <alternativeName>
        <fullName evidence="1">Selenocysteine reductase</fullName>
    </alternativeName>
</protein>
<organism>
    <name type="scientific">Yersinia pestis bv. Antiqua (strain Nepal516)</name>
    <dbReference type="NCBI Taxonomy" id="377628"/>
    <lineage>
        <taxon>Bacteria</taxon>
        <taxon>Pseudomonadati</taxon>
        <taxon>Pseudomonadota</taxon>
        <taxon>Gammaproteobacteria</taxon>
        <taxon>Enterobacterales</taxon>
        <taxon>Yersiniaceae</taxon>
        <taxon>Yersinia</taxon>
    </lineage>
</organism>
<dbReference type="EC" id="2.8.1.7" evidence="1"/>
<dbReference type="EC" id="4.4.1.16" evidence="1"/>
<dbReference type="EMBL" id="CP000305">
    <property type="protein sequence ID" value="ABG18184.1"/>
    <property type="molecule type" value="Genomic_DNA"/>
</dbReference>
<dbReference type="EMBL" id="ACNQ01000010">
    <property type="protein sequence ID" value="EEO76760.1"/>
    <property type="molecule type" value="Genomic_DNA"/>
</dbReference>
<dbReference type="RefSeq" id="WP_002211805.1">
    <property type="nucleotide sequence ID" value="NZ_ACNQ01000010.1"/>
</dbReference>
<dbReference type="SMR" id="Q1CIJ6"/>
<dbReference type="GeneID" id="57976274"/>
<dbReference type="KEGG" id="ypn:YPN_1855"/>
<dbReference type="HOGENOM" id="CLU_003433_2_5_6"/>
<dbReference type="UniPathway" id="UPA00266"/>
<dbReference type="Proteomes" id="UP000008936">
    <property type="component" value="Chromosome"/>
</dbReference>
<dbReference type="GO" id="GO:0005737">
    <property type="term" value="C:cytoplasm"/>
    <property type="evidence" value="ECO:0007669"/>
    <property type="project" value="UniProtKB-SubCell"/>
</dbReference>
<dbReference type="GO" id="GO:0031071">
    <property type="term" value="F:cysteine desulfurase activity"/>
    <property type="evidence" value="ECO:0007669"/>
    <property type="project" value="UniProtKB-UniRule"/>
</dbReference>
<dbReference type="GO" id="GO:0030170">
    <property type="term" value="F:pyridoxal phosphate binding"/>
    <property type="evidence" value="ECO:0007669"/>
    <property type="project" value="InterPro"/>
</dbReference>
<dbReference type="GO" id="GO:0009000">
    <property type="term" value="F:selenocysteine lyase activity"/>
    <property type="evidence" value="ECO:0007669"/>
    <property type="project" value="UniProtKB-UniRule"/>
</dbReference>
<dbReference type="GO" id="GO:0006534">
    <property type="term" value="P:cysteine metabolic process"/>
    <property type="evidence" value="ECO:0007669"/>
    <property type="project" value="InterPro"/>
</dbReference>
<dbReference type="CDD" id="cd06453">
    <property type="entry name" value="SufS_like"/>
    <property type="match status" value="1"/>
</dbReference>
<dbReference type="Gene3D" id="3.90.1150.10">
    <property type="entry name" value="Aspartate Aminotransferase, domain 1"/>
    <property type="match status" value="1"/>
</dbReference>
<dbReference type="Gene3D" id="3.40.640.10">
    <property type="entry name" value="Type I PLP-dependent aspartate aminotransferase-like (Major domain)"/>
    <property type="match status" value="1"/>
</dbReference>
<dbReference type="HAMAP" id="MF_01831">
    <property type="entry name" value="SufS_aminotrans_5"/>
    <property type="match status" value="1"/>
</dbReference>
<dbReference type="InterPro" id="IPR000192">
    <property type="entry name" value="Aminotrans_V_dom"/>
</dbReference>
<dbReference type="InterPro" id="IPR020578">
    <property type="entry name" value="Aminotrans_V_PyrdxlP_BS"/>
</dbReference>
<dbReference type="InterPro" id="IPR010970">
    <property type="entry name" value="Cys_dSase_SufS"/>
</dbReference>
<dbReference type="InterPro" id="IPR015424">
    <property type="entry name" value="PyrdxlP-dep_Trfase"/>
</dbReference>
<dbReference type="InterPro" id="IPR015421">
    <property type="entry name" value="PyrdxlP-dep_Trfase_major"/>
</dbReference>
<dbReference type="InterPro" id="IPR015422">
    <property type="entry name" value="PyrdxlP-dep_Trfase_small"/>
</dbReference>
<dbReference type="NCBIfam" id="NF006791">
    <property type="entry name" value="PRK09295.1"/>
    <property type="match status" value="1"/>
</dbReference>
<dbReference type="NCBIfam" id="TIGR01979">
    <property type="entry name" value="sufS"/>
    <property type="match status" value="1"/>
</dbReference>
<dbReference type="PANTHER" id="PTHR43586">
    <property type="entry name" value="CYSTEINE DESULFURASE"/>
    <property type="match status" value="1"/>
</dbReference>
<dbReference type="PANTHER" id="PTHR43586:SF25">
    <property type="entry name" value="CYSTEINE DESULFURASE"/>
    <property type="match status" value="1"/>
</dbReference>
<dbReference type="Pfam" id="PF00266">
    <property type="entry name" value="Aminotran_5"/>
    <property type="match status" value="1"/>
</dbReference>
<dbReference type="SUPFAM" id="SSF53383">
    <property type="entry name" value="PLP-dependent transferases"/>
    <property type="match status" value="1"/>
</dbReference>
<dbReference type="PROSITE" id="PS00595">
    <property type="entry name" value="AA_TRANSFER_CLASS_5"/>
    <property type="match status" value="1"/>
</dbReference>
<reference key="1">
    <citation type="journal article" date="2006" name="J. Bacteriol.">
        <title>Complete genome sequence of Yersinia pestis strains Antiqua and Nepal516: evidence of gene reduction in an emerging pathogen.</title>
        <authorList>
            <person name="Chain P.S.G."/>
            <person name="Hu P."/>
            <person name="Malfatti S.A."/>
            <person name="Radnedge L."/>
            <person name="Larimer F."/>
            <person name="Vergez L.M."/>
            <person name="Worsham P."/>
            <person name="Chu M.C."/>
            <person name="Andersen G.L."/>
        </authorList>
    </citation>
    <scope>NUCLEOTIDE SEQUENCE [LARGE SCALE GENOMIC DNA]</scope>
    <source>
        <strain>Nepal516</strain>
    </source>
</reference>
<reference key="2">
    <citation type="submission" date="2009-04" db="EMBL/GenBank/DDBJ databases">
        <title>Yersinia pestis Nepal516A whole genome shotgun sequencing project.</title>
        <authorList>
            <person name="Plunkett G. III"/>
            <person name="Anderson B.D."/>
            <person name="Baumler D.J."/>
            <person name="Burland V."/>
            <person name="Cabot E.L."/>
            <person name="Glasner J.D."/>
            <person name="Mau B."/>
            <person name="Neeno-Eckwall E."/>
            <person name="Perna N.T."/>
            <person name="Munk A.C."/>
            <person name="Tapia R."/>
            <person name="Green L.D."/>
            <person name="Rogers Y.C."/>
            <person name="Detter J.C."/>
            <person name="Bruce D.C."/>
            <person name="Brettin T.S."/>
        </authorList>
    </citation>
    <scope>NUCLEOTIDE SEQUENCE [LARGE SCALE GENOMIC DNA]</scope>
    <source>
        <strain>Nepal516</strain>
    </source>
</reference>
<sequence>MNFPIERVRADFPLLSRQVNGQPLVYLDSAASAQKPQAVIDKELHFYRDGYAAVHRGIHSLSAEATQQMEAVRTQVADFIHAASAEEIIFVRGTTEAINLVANSYGRHFLAAGDSIIITEMEHHANIVPWQMLAQDLGVEIRVWPLTATGELEITALAALIDDTTRLLAVTQVSNVLGTVNPIKDIVAQAKAAGLVVLVDGAQAVMHQPVDVQALGCDFYVFSGHKLYGPSGIGILYGKSALLQQMPPWEGGGAMIKTVSLTQGTTFADAPWRFEAGSPNTAGIMGLGAAIDYVTELGLLPIQQYEQSLMHYALAQLSQIKSLTLYGPTERAGVIAFNLGQHHAYDVGSFLDQYGIAIRTGHHCAMPLMAFYQVPSMCRASLALYNTREDVDRLVAGLQRIEKLLG</sequence>
<comment type="function">
    <text evidence="1">Cysteine desulfurases mobilize the sulfur from L-cysteine to yield L-alanine, an essential step in sulfur metabolism for biosynthesis of a variety of sulfur-containing biomolecules. Component of the suf operon, which is activated and required under specific conditions such as oxidative stress and iron limitation. Acts as a potent selenocysteine lyase in vitro, that mobilizes selenium from L-selenocysteine. Selenocysteine lyase activity is however unsure in vivo.</text>
</comment>
<comment type="catalytic activity">
    <reaction evidence="1">
        <text>(sulfur carrier)-H + L-cysteine = (sulfur carrier)-SH + L-alanine</text>
        <dbReference type="Rhea" id="RHEA:43892"/>
        <dbReference type="Rhea" id="RHEA-COMP:14737"/>
        <dbReference type="Rhea" id="RHEA-COMP:14739"/>
        <dbReference type="ChEBI" id="CHEBI:29917"/>
        <dbReference type="ChEBI" id="CHEBI:35235"/>
        <dbReference type="ChEBI" id="CHEBI:57972"/>
        <dbReference type="ChEBI" id="CHEBI:64428"/>
        <dbReference type="EC" id="2.8.1.7"/>
    </reaction>
</comment>
<comment type="catalytic activity">
    <reaction evidence="1">
        <text>L-selenocysteine + AH2 = hydrogenselenide + L-alanine + A + H(+)</text>
        <dbReference type="Rhea" id="RHEA:11632"/>
        <dbReference type="ChEBI" id="CHEBI:13193"/>
        <dbReference type="ChEBI" id="CHEBI:15378"/>
        <dbReference type="ChEBI" id="CHEBI:17499"/>
        <dbReference type="ChEBI" id="CHEBI:29317"/>
        <dbReference type="ChEBI" id="CHEBI:57843"/>
        <dbReference type="ChEBI" id="CHEBI:57972"/>
        <dbReference type="EC" id="4.4.1.16"/>
    </reaction>
</comment>
<comment type="cofactor">
    <cofactor evidence="1">
        <name>pyridoxal 5'-phosphate</name>
        <dbReference type="ChEBI" id="CHEBI:597326"/>
    </cofactor>
</comment>
<comment type="pathway">
    <text evidence="1">Cofactor biosynthesis; iron-sulfur cluster biosynthesis.</text>
</comment>
<comment type="subunit">
    <text evidence="1">Homodimer. Interacts with SufE and the SufBCD complex composed of SufB, SufC and SufD. The interaction with SufE is required to mediate the direct transfer of the sulfur atom from the S-sulfanylcysteine.</text>
</comment>
<comment type="subcellular location">
    <subcellularLocation>
        <location evidence="1">Cytoplasm</location>
    </subcellularLocation>
</comment>
<comment type="similarity">
    <text evidence="1">Belongs to the class-V pyridoxal-phosphate-dependent aminotransferase family. Csd subfamily.</text>
</comment>
<name>SUFS_YERPN</name>
<evidence type="ECO:0000255" key="1">
    <source>
        <dbReference type="HAMAP-Rule" id="MF_01831"/>
    </source>
</evidence>
<accession>Q1CIJ6</accession>
<accession>C4GTF9</accession>
<proteinExistence type="inferred from homology"/>
<feature type="chain" id="PRO_1000070433" description="Cysteine desulfurase">
    <location>
        <begin position="1"/>
        <end position="406"/>
    </location>
</feature>
<feature type="active site" description="Cysteine persulfide intermediate" evidence="1">
    <location>
        <position position="364"/>
    </location>
</feature>
<feature type="modified residue" description="N6-(pyridoxal phosphate)lysine" evidence="1">
    <location>
        <position position="226"/>
    </location>
</feature>
<keyword id="KW-0963">Cytoplasm</keyword>
<keyword id="KW-0456">Lyase</keyword>
<keyword id="KW-0663">Pyridoxal phosphate</keyword>
<keyword id="KW-0808">Transferase</keyword>